<reference key="1">
    <citation type="journal article" date="2006" name="J. Bacteriol.">
        <title>The genome sequence of Methanosphaera stadtmanae reveals why this human intestinal archaeon is restricted to methanol and H2 for methane formation and ATP synthesis.</title>
        <authorList>
            <person name="Fricke W.F."/>
            <person name="Seedorf H."/>
            <person name="Henne A."/>
            <person name="Kruer M."/>
            <person name="Liesegang H."/>
            <person name="Hedderich R."/>
            <person name="Gottschalk G."/>
            <person name="Thauer R.K."/>
        </authorList>
    </citation>
    <scope>NUCLEOTIDE SEQUENCE [LARGE SCALE GENOMIC DNA]</scope>
    <source>
        <strain>ATCC 43021 / DSM 3091 / JCM 11832 / MCB-3</strain>
    </source>
</reference>
<dbReference type="EMBL" id="CP000102">
    <property type="protein sequence ID" value="ABC57275.1"/>
    <property type="molecule type" value="Genomic_DNA"/>
</dbReference>
<dbReference type="SMR" id="Q2NFX8"/>
<dbReference type="STRING" id="339860.Msp_0887"/>
<dbReference type="KEGG" id="mst:Msp_0887"/>
<dbReference type="eggNOG" id="arCOG04086">
    <property type="taxonomic scope" value="Archaea"/>
</dbReference>
<dbReference type="HOGENOM" id="CLU_055156_6_0_2"/>
<dbReference type="OrthoDB" id="6379at2157"/>
<dbReference type="Proteomes" id="UP000001931">
    <property type="component" value="Chromosome"/>
</dbReference>
<dbReference type="GO" id="GO:0022625">
    <property type="term" value="C:cytosolic large ribosomal subunit"/>
    <property type="evidence" value="ECO:0007669"/>
    <property type="project" value="TreeGrafter"/>
</dbReference>
<dbReference type="GO" id="GO:0003723">
    <property type="term" value="F:RNA binding"/>
    <property type="evidence" value="ECO:0007669"/>
    <property type="project" value="TreeGrafter"/>
</dbReference>
<dbReference type="GO" id="GO:0003735">
    <property type="term" value="F:structural constituent of ribosome"/>
    <property type="evidence" value="ECO:0007669"/>
    <property type="project" value="InterPro"/>
</dbReference>
<dbReference type="GO" id="GO:0000463">
    <property type="term" value="P:maturation of LSU-rRNA from tricistronic rRNA transcript (SSU-rRNA, 5.8S rRNA, LSU-rRNA)"/>
    <property type="evidence" value="ECO:0007669"/>
    <property type="project" value="TreeGrafter"/>
</dbReference>
<dbReference type="GO" id="GO:0006412">
    <property type="term" value="P:translation"/>
    <property type="evidence" value="ECO:0007669"/>
    <property type="project" value="UniProtKB-UniRule"/>
</dbReference>
<dbReference type="CDD" id="cd01657">
    <property type="entry name" value="Ribosomal_L7_archeal_euk"/>
    <property type="match status" value="1"/>
</dbReference>
<dbReference type="Gene3D" id="1.10.15.30">
    <property type="match status" value="1"/>
</dbReference>
<dbReference type="Gene3D" id="3.30.1390.20">
    <property type="entry name" value="Ribosomal protein L30, ferredoxin-like fold domain"/>
    <property type="match status" value="1"/>
</dbReference>
<dbReference type="HAMAP" id="MF_01371_A">
    <property type="entry name" value="Ribosomal_uL30_A"/>
    <property type="match status" value="1"/>
</dbReference>
<dbReference type="InterPro" id="IPR036919">
    <property type="entry name" value="Ribo_uL30_ferredoxin-like_sf"/>
</dbReference>
<dbReference type="InterPro" id="IPR039699">
    <property type="entry name" value="Ribosomal_uL30"/>
</dbReference>
<dbReference type="InterPro" id="IPR005997">
    <property type="entry name" value="Ribosomal_uL30_arc"/>
</dbReference>
<dbReference type="InterPro" id="IPR018038">
    <property type="entry name" value="Ribosomal_uL30_CS"/>
</dbReference>
<dbReference type="InterPro" id="IPR035808">
    <property type="entry name" value="Ribosomal_uL30_euk_arc"/>
</dbReference>
<dbReference type="InterPro" id="IPR016082">
    <property type="entry name" value="Ribosomal_uL30_ferredoxin-like"/>
</dbReference>
<dbReference type="NCBIfam" id="NF004711">
    <property type="entry name" value="PRK06049.1"/>
    <property type="match status" value="1"/>
</dbReference>
<dbReference type="NCBIfam" id="TIGR01309">
    <property type="entry name" value="uL30_arch"/>
    <property type="match status" value="1"/>
</dbReference>
<dbReference type="PANTHER" id="PTHR11524">
    <property type="entry name" value="60S RIBOSOMAL PROTEIN L7"/>
    <property type="match status" value="1"/>
</dbReference>
<dbReference type="PANTHER" id="PTHR11524:SF16">
    <property type="entry name" value="LARGE RIBOSOMAL SUBUNIT PROTEIN UL30"/>
    <property type="match status" value="1"/>
</dbReference>
<dbReference type="Pfam" id="PF00327">
    <property type="entry name" value="Ribosomal_L30"/>
    <property type="match status" value="1"/>
</dbReference>
<dbReference type="SUPFAM" id="SSF55129">
    <property type="entry name" value="Ribosomal protein L30p/L7e"/>
    <property type="match status" value="1"/>
</dbReference>
<dbReference type="PROSITE" id="PS00634">
    <property type="entry name" value="RIBOSOMAL_L30"/>
    <property type="match status" value="1"/>
</dbReference>
<evidence type="ECO:0000255" key="1">
    <source>
        <dbReference type="HAMAP-Rule" id="MF_01371"/>
    </source>
</evidence>
<evidence type="ECO:0000305" key="2"/>
<feature type="chain" id="PRO_0000273908" description="Large ribosomal subunit protein uL30">
    <location>
        <begin position="1"/>
        <end position="152"/>
    </location>
</feature>
<protein>
    <recommendedName>
        <fullName evidence="1">Large ribosomal subunit protein uL30</fullName>
    </recommendedName>
    <alternativeName>
        <fullName evidence="2">50S ribosomal protein L30</fullName>
    </alternativeName>
</protein>
<name>RL30_METST</name>
<sequence length="152" mass="17320">MYAIIRIRGRTGIKKNIADTLDMLNLTRISHAVVIPETPSYKGMLQKAKDYITWGEVSEDTFKLLVSERGRLPGNKRVTDEYVKENTDYDSVEALAVAIYNEETTLKDSGLKPLFRLNPPRKGYENTKKTFVEGGSLGYRSEEINELLEKMI</sequence>
<gene>
    <name evidence="1" type="primary">rpl30</name>
    <name type="ordered locus">Msp_0887</name>
</gene>
<proteinExistence type="inferred from homology"/>
<comment type="subunit">
    <text evidence="1">Part of the 50S ribosomal subunit.</text>
</comment>
<comment type="similarity">
    <text evidence="1">Belongs to the universal ribosomal protein uL30 family.</text>
</comment>
<accession>Q2NFX8</accession>
<keyword id="KW-1185">Reference proteome</keyword>
<keyword id="KW-0687">Ribonucleoprotein</keyword>
<keyword id="KW-0689">Ribosomal protein</keyword>
<organism>
    <name type="scientific">Methanosphaera stadtmanae (strain ATCC 43021 / DSM 3091 / JCM 11832 / MCB-3)</name>
    <dbReference type="NCBI Taxonomy" id="339860"/>
    <lineage>
        <taxon>Archaea</taxon>
        <taxon>Methanobacteriati</taxon>
        <taxon>Methanobacteriota</taxon>
        <taxon>Methanomada group</taxon>
        <taxon>Methanobacteria</taxon>
        <taxon>Methanobacteriales</taxon>
        <taxon>Methanobacteriaceae</taxon>
        <taxon>Methanosphaera</taxon>
    </lineage>
</organism>